<feature type="chain" id="PRO_0000283791" description="FH1/FH2 domain-containing protein 3">
    <location>
        <begin position="1"/>
        <end position="1422"/>
    </location>
</feature>
<feature type="domain" description="GBD/FH3" evidence="5">
    <location>
        <begin position="18"/>
        <end position="411"/>
    </location>
</feature>
<feature type="domain" description="FH1">
    <location>
        <begin position="827"/>
        <end position="858"/>
    </location>
</feature>
<feature type="domain" description="FH2" evidence="6">
    <location>
        <begin position="883"/>
        <end position="1279"/>
    </location>
</feature>
<feature type="domain" description="DAD" evidence="4">
    <location>
        <begin position="1359"/>
        <end position="1391"/>
    </location>
</feature>
<feature type="region of interest" description="Disordered" evidence="7">
    <location>
        <begin position="323"/>
        <end position="464"/>
    </location>
</feature>
<feature type="region of interest" description="Disordered" evidence="7">
    <location>
        <begin position="521"/>
        <end position="666"/>
    </location>
</feature>
<feature type="region of interest" description="Disordered" evidence="7">
    <location>
        <begin position="687"/>
        <end position="708"/>
    </location>
</feature>
<feature type="region of interest" description="Disordered" evidence="7">
    <location>
        <begin position="754"/>
        <end position="781"/>
    </location>
</feature>
<feature type="region of interest" description="Disordered" evidence="7">
    <location>
        <begin position="821"/>
        <end position="849"/>
    </location>
</feature>
<feature type="region of interest" description="Disordered" evidence="7">
    <location>
        <begin position="1262"/>
        <end position="1305"/>
    </location>
</feature>
<feature type="region of interest" description="Disordered" evidence="7">
    <location>
        <begin position="1320"/>
        <end position="1357"/>
    </location>
</feature>
<feature type="region of interest" description="Disordered" evidence="7">
    <location>
        <begin position="1374"/>
        <end position="1410"/>
    </location>
</feature>
<feature type="coiled-coil region" evidence="3">
    <location>
        <begin position="448"/>
        <end position="480"/>
    </location>
</feature>
<feature type="compositionally biased region" description="Basic residues" evidence="7">
    <location>
        <begin position="357"/>
        <end position="366"/>
    </location>
</feature>
<feature type="compositionally biased region" description="Polar residues" evidence="7">
    <location>
        <begin position="367"/>
        <end position="390"/>
    </location>
</feature>
<feature type="compositionally biased region" description="Low complexity" evidence="7">
    <location>
        <begin position="410"/>
        <end position="430"/>
    </location>
</feature>
<feature type="compositionally biased region" description="Polar residues" evidence="7">
    <location>
        <begin position="438"/>
        <end position="449"/>
    </location>
</feature>
<feature type="compositionally biased region" description="Basic and acidic residues" evidence="7">
    <location>
        <begin position="450"/>
        <end position="464"/>
    </location>
</feature>
<feature type="compositionally biased region" description="Low complexity" evidence="7">
    <location>
        <begin position="521"/>
        <end position="535"/>
    </location>
</feature>
<feature type="compositionally biased region" description="Polar residues" evidence="7">
    <location>
        <begin position="536"/>
        <end position="547"/>
    </location>
</feature>
<feature type="compositionally biased region" description="Acidic residues" evidence="7">
    <location>
        <begin position="559"/>
        <end position="569"/>
    </location>
</feature>
<feature type="compositionally biased region" description="Acidic residues" evidence="7">
    <location>
        <begin position="592"/>
        <end position="603"/>
    </location>
</feature>
<feature type="compositionally biased region" description="Basic and acidic residues" evidence="7">
    <location>
        <begin position="604"/>
        <end position="624"/>
    </location>
</feature>
<feature type="compositionally biased region" description="Low complexity" evidence="7">
    <location>
        <begin position="626"/>
        <end position="635"/>
    </location>
</feature>
<feature type="compositionally biased region" description="Basic and acidic residues" evidence="7">
    <location>
        <begin position="637"/>
        <end position="651"/>
    </location>
</feature>
<feature type="compositionally biased region" description="Pro residues" evidence="7">
    <location>
        <begin position="827"/>
        <end position="849"/>
    </location>
</feature>
<feature type="compositionally biased region" description="Basic residues" evidence="7">
    <location>
        <begin position="1264"/>
        <end position="1278"/>
    </location>
</feature>
<feature type="compositionally biased region" description="Basic residues" evidence="7">
    <location>
        <begin position="1385"/>
        <end position="1400"/>
    </location>
</feature>
<feature type="modified residue" description="Phosphoserine" evidence="2">
    <location>
        <position position="345"/>
    </location>
</feature>
<feature type="modified residue" description="Phosphoserine" evidence="2">
    <location>
        <position position="375"/>
    </location>
</feature>
<feature type="modified residue" description="Phosphoserine" evidence="2">
    <location>
        <position position="763"/>
    </location>
</feature>
<feature type="modified residue" description="Phosphothreonine" evidence="2">
    <location>
        <position position="775"/>
    </location>
</feature>
<feature type="splice variant" id="VSP_044682" description="In isoform 4." evidence="13">
    <original>K</original>
    <variation>KEEEEEEEQPITEPSSEEEREDDASCQGKDSKVGAASGQSPTGRDAAPKSSALPAVSNASSQGKPLLVGTAGGTTWHSGSSGSEATPSALLSPPASAARPSSATPGSLKVSPTIDKLPYVPHSPFHLFSYDFEDSSLSTKEKEAESQKENSSSDSFSLSTYSASEPYHFRSFSSNR</variation>
    <location>
        <position position="399"/>
    </location>
</feature>
<feature type="splice variant" id="VSP_024397" description="In isoform 2." evidence="12">
    <location>
        <begin position="400"/>
        <end position="437"/>
    </location>
</feature>
<feature type="splice variant" id="VSP_024398" description="In isoform 2, isoform 3 and isoform 4." evidence="12 13">
    <original>F</original>
    <variation>FSRDYLDKREEQRQAREE</variation>
    <location>
        <position position="481"/>
    </location>
</feature>
<feature type="splice variant" id="VSP_044683" description="In isoform 4." evidence="13">
    <original>TD</original>
    <variation>TDTDEEEEVE</variation>
    <location>
        <begin position="1282"/>
        <end position="1283"/>
    </location>
</feature>
<feature type="sequence variant" id="VAR_085890" description="In CMH28; uncertain significance; dbSNP:rs752857554." evidence="10">
    <original>A</original>
    <variation>V</variation>
    <location>
        <position position="321"/>
    </location>
</feature>
<feature type="sequence variant" id="VAR_085891" description="In CMH28; uncertain significance; dbSNP:rs760471234." evidence="10">
    <original>G</original>
    <variation>R</variation>
    <location>
        <position position="351"/>
    </location>
</feature>
<feature type="sequence variant" id="VAR_085892" description="In CMH28; uncertain significance; dbSNP:rs780578862." evidence="10">
    <original>R</original>
    <variation>C</variation>
    <location>
        <position position="363"/>
    </location>
</feature>
<feature type="sequence variant" id="VAR_085893" description="In CMH28; uncertain significance; dbSNP:rs770668539." evidence="10">
    <original>K</original>
    <variation>R</variation>
    <location>
        <position position="371"/>
    </location>
</feature>
<feature type="sequence variant" id="VAR_085894" description="In CMH28; uncertain significance; dbSNP:rs1215488825." evidence="10">
    <original>Q</original>
    <variation>H</variation>
    <location>
        <position position="383"/>
    </location>
</feature>
<feature type="sequence variant" id="VAR_085895" description="In CMH28; uncertain significance; dbSNP:rs1211144968." evidence="10">
    <original>V</original>
    <variation>E</variation>
    <location>
        <position position="419"/>
    </location>
</feature>
<feature type="sequence variant" id="VAR_085896" description="In CMH28; uncertain significance; dbSNP:rs199579476." evidence="10">
    <original>P</original>
    <variation>L</variation>
    <location>
        <position position="440"/>
    </location>
</feature>
<feature type="sequence variant" id="VAR_085897" description="In CMH28; uncertain significance." evidence="10">
    <original>R</original>
    <variation>G</variation>
    <location>
        <position position="459"/>
    </location>
</feature>
<feature type="sequence variant" id="VAR_085898" description="In CMH28; uncertain significance." evidence="10">
    <original>R</original>
    <variation>G</variation>
    <location>
        <position position="462"/>
    </location>
</feature>
<feature type="sequence variant" id="VAR_085899" description="In CMH28; uncertain significance." evidence="10">
    <original>R</original>
    <variation>P</variation>
    <location>
        <position position="462"/>
    </location>
</feature>
<feature type="sequence variant" id="VAR_085900" description="In CMH28; uncertain significance; dbSNP:rs758818742." evidence="10">
    <original>R</original>
    <variation>W</variation>
    <location>
        <position position="462"/>
    </location>
</feature>
<feature type="sequence variant" id="VAR_085901" description="In CMH28; uncertain significance; dbSNP:rs370344363." evidence="10">
    <original>R</original>
    <variation>S</variation>
    <location>
        <position position="466"/>
    </location>
</feature>
<feature type="sequence variant" id="VAR_085902" description="In CMH28; uncertain significance; dbSNP:rs774149210." evidence="10">
    <original>R</original>
    <variation>S</variation>
    <location>
        <position position="469"/>
    </location>
</feature>
<feature type="sequence variant" id="VAR_055804" description="In dbSNP:rs9964535.">
    <original>R</original>
    <variation>W</variation>
    <location>
        <position position="475"/>
    </location>
</feature>
<feature type="sequence variant" id="VAR_085903" description="In CMH28; uncertain significance; dbSNP:rs368544178." evidence="10">
    <original>N</original>
    <variation>K</variation>
    <location>
        <position position="479"/>
    </location>
</feature>
<feature type="sequence variant" id="VAR_085904" description="In CMH28; uncertain significance; dbSNP:rs1451852171." evidence="10">
    <original>E</original>
    <variation>K</variation>
    <location>
        <position position="640"/>
    </location>
</feature>
<feature type="sequence variant" id="VAR_085905" description="In CMH28; uncertain significance; dbSNP:rs541250101." evidence="10">
    <original>G</original>
    <variation>C</variation>
    <location>
        <position position="653"/>
    </location>
</feature>
<feature type="sequence variant" id="VAR_085906" description="In CMH28; uncertain significance; dbSNP:rs757717851." evidence="10">
    <original>A</original>
    <variation>T</variation>
    <location>
        <position position="657"/>
    </location>
</feature>
<feature type="sequence variant" id="VAR_085907" description="In CMH28; uncertain significance." evidence="10">
    <original>D</original>
    <variation>N</variation>
    <location>
        <position position="770"/>
    </location>
</feature>
<feature type="sequence variant" id="VAR_085908" description="In CMH28; uncertain significance; dbSNP:rs1462970284." evidence="10">
    <original>P</original>
    <variation>L</variation>
    <location>
        <position position="865"/>
    </location>
</feature>
<feature type="sequence variant" id="VAR_085909" description="In CMH28; uncertain significance; dbSNP:rs560946106." evidence="10">
    <original>A</original>
    <variation>T</variation>
    <location>
        <position position="871"/>
    </location>
</feature>
<feature type="sequence variant" id="VAR_085910" description="In CMH28; uncertain significance; dbSNP:rs138484144." evidence="10">
    <original>R</original>
    <variation>Q</variation>
    <location>
        <position position="1194"/>
    </location>
</feature>
<feature type="sequence variant" id="VAR_085911" description="In CMH28; uncertain significance." evidence="10">
    <original>N</original>
    <variation>H</variation>
    <location>
        <position position="1356"/>
    </location>
</feature>
<feature type="sequence variant" id="VAR_085912" description="In CMH28; uncertain significance; dbSNP:rs1053578528." evidence="10">
    <original>V</original>
    <variation>G</variation>
    <location>
        <position position="1376"/>
    </location>
</feature>
<feature type="sequence variant" id="VAR_085913" description="In CMH28; uncertain significance." evidence="10">
    <location>
        <begin position="1397"/>
        <end position="1422"/>
    </location>
</feature>
<feature type="sequence conflict" description="In Ref. 1; BAC67014." evidence="14" ref="1">
    <original>D</original>
    <variation>G</variation>
    <location>
        <position position="71"/>
    </location>
</feature>
<feature type="sequence conflict" description="In Ref. 2; ADL62709." evidence="14" ref="2">
    <original>K</original>
    <variation>E</variation>
    <location>
        <position position="202"/>
    </location>
</feature>
<feature type="sequence conflict" description="In Ref. 2; ADL62709." evidence="14" ref="2">
    <original>E</original>
    <variation>G</variation>
    <location>
        <position position="432"/>
    </location>
</feature>
<feature type="sequence conflict" description="In Ref. 1; BAC67014." evidence="14" ref="1">
    <original>L</original>
    <variation>W</variation>
    <location>
        <position position="435"/>
    </location>
</feature>
<feature type="sequence conflict" description="In Ref. 2; ADL62709." evidence="14" ref="2">
    <original>S</original>
    <variation>G</variation>
    <location>
        <position position="527"/>
    </location>
</feature>
<feature type="sequence conflict" description="In Ref. 2; ADL62709." evidence="14" ref="2">
    <original>G</original>
    <variation>A</variation>
    <location>
        <position position="581"/>
    </location>
</feature>
<feature type="sequence conflict" description="In Ref. 2; ADL62709." evidence="14" ref="2">
    <original>S</original>
    <variation>P</variation>
    <location>
        <position position="647"/>
    </location>
</feature>
<feature type="sequence conflict" description="In Ref. 4; BAC87252." evidence="14" ref="4">
    <original>L</original>
    <variation>K</variation>
    <location>
        <position position="654"/>
    </location>
</feature>
<feature type="sequence conflict" description="In Ref. 6; AAH81563." evidence="14" ref="6">
    <original>V</original>
    <variation>I</variation>
    <location>
        <position position="1134"/>
    </location>
</feature>
<feature type="sequence conflict" description="In Ref. 4; BAB15463." evidence="14" ref="4">
    <original>T</original>
    <variation>A</variation>
    <location>
        <position position="1417"/>
    </location>
</feature>
<feature type="modified residue" description="Phosphothreonine" evidence="9">
    <location sequence="Q2V2M9-4">
        <position position="1474"/>
    </location>
</feature>
<feature type="modified residue" description="Phosphothreonine" evidence="9">
    <location sequence="Q2V2M9-4">
        <position position="1476"/>
    </location>
</feature>
<feature type="sequence variant" id="VAR_085914" description="In CMH28." evidence="10 11">
    <location sequence="Q2V2M9-4">
        <position position="527"/>
    </location>
</feature>
<feature type="sequence variant" id="VAR_085915" description="In CMH28; dbSNP:rs2036159242." evidence="10">
    <original>Y</original>
    <variation>C</variation>
    <location sequence="Q2V2M9-4">
        <position position="528"/>
    </location>
</feature>
<feature type="sequence variant" id="VAR_085916" description="In CMH28; uncertain significance; dbSNP:rs2036162205." evidence="10">
    <original>A</original>
    <variation>E</variation>
    <location sequence="Q2V2M9-4">
        <position position="542"/>
    </location>
</feature>
<reference key="1">
    <citation type="journal article" date="2005" name="Genes Cells">
        <title>Fhos2, a novel formin-related actin-organizing protein, probably associates with the nestin intermediate filament.</title>
        <authorList>
            <person name="Kanaya H."/>
            <person name="Takeya R."/>
            <person name="Takeuchi K."/>
            <person name="Watanabe N."/>
            <person name="Jing N."/>
            <person name="Sumimoto H."/>
        </authorList>
    </citation>
    <scope>NUCLEOTIDE SEQUENCE [MRNA] (ISOFORM 1)</scope>
    <scope>TISSUE SPECIFICITY</scope>
    <source>
        <tissue>Fetal brain</tissue>
    </source>
</reference>
<reference key="2">
    <citation type="journal article" date="2010" name="J. Cell Biol.">
        <title>Formin follows function: a muscle-specific isoform of FHOD3 is regulated by CK2 phosphorylation and promotes myofibril maintenance.</title>
        <authorList>
            <person name="Iskratsch T."/>
            <person name="Lange S."/>
            <person name="Dwyer J."/>
            <person name="Kho A.L."/>
            <person name="dos Remedios C."/>
            <person name="Ehler E."/>
        </authorList>
    </citation>
    <scope>NUCLEOTIDE SEQUENCE [MRNA] (ISOFORM 4)</scope>
    <scope>FUNCTION</scope>
    <scope>INTERACTION WITH SQSTM1</scope>
    <scope>SUBCELLULAR LOCATION</scope>
    <scope>PHOSPHORYLATION AT THR-1474 AND THR-1476 (ISOFORM 4)</scope>
    <scope>TISSUE SPECIFICITY</scope>
</reference>
<reference key="3">
    <citation type="journal article" date="2005" name="Nature">
        <title>DNA sequence and analysis of human chromosome 18.</title>
        <authorList>
            <person name="Nusbaum C."/>
            <person name="Zody M.C."/>
            <person name="Borowsky M.L."/>
            <person name="Kamal M."/>
            <person name="Kodira C.D."/>
            <person name="Taylor T.D."/>
            <person name="Whittaker C.A."/>
            <person name="Chang J.L."/>
            <person name="Cuomo C.A."/>
            <person name="Dewar K."/>
            <person name="FitzGerald M.G."/>
            <person name="Yang X."/>
            <person name="Abouelleil A."/>
            <person name="Allen N.R."/>
            <person name="Anderson S."/>
            <person name="Bloom T."/>
            <person name="Bugalter B."/>
            <person name="Butler J."/>
            <person name="Cook A."/>
            <person name="DeCaprio D."/>
            <person name="Engels R."/>
            <person name="Garber M."/>
            <person name="Gnirke A."/>
            <person name="Hafez N."/>
            <person name="Hall J.L."/>
            <person name="Norman C.H."/>
            <person name="Itoh T."/>
            <person name="Jaffe D.B."/>
            <person name="Kuroki Y."/>
            <person name="Lehoczky J."/>
            <person name="Lui A."/>
            <person name="Macdonald P."/>
            <person name="Mauceli E."/>
            <person name="Mikkelsen T.S."/>
            <person name="Naylor J.W."/>
            <person name="Nicol R."/>
            <person name="Nguyen C."/>
            <person name="Noguchi H."/>
            <person name="O'Leary S.B."/>
            <person name="Piqani B."/>
            <person name="Smith C.L."/>
            <person name="Talamas J.A."/>
            <person name="Topham K."/>
            <person name="Totoki Y."/>
            <person name="Toyoda A."/>
            <person name="Wain H.M."/>
            <person name="Young S.K."/>
            <person name="Zeng Q."/>
            <person name="Zimmer A.R."/>
            <person name="Fujiyama A."/>
            <person name="Hattori M."/>
            <person name="Birren B.W."/>
            <person name="Sakaki Y."/>
            <person name="Lander E.S."/>
        </authorList>
    </citation>
    <scope>NUCLEOTIDE SEQUENCE [LARGE SCALE GENOMIC DNA]</scope>
</reference>
<reference key="4">
    <citation type="journal article" date="2004" name="Nat. Genet.">
        <title>Complete sequencing and characterization of 21,243 full-length human cDNAs.</title>
        <authorList>
            <person name="Ota T."/>
            <person name="Suzuki Y."/>
            <person name="Nishikawa T."/>
            <person name="Otsuki T."/>
            <person name="Sugiyama T."/>
            <person name="Irie R."/>
            <person name="Wakamatsu A."/>
            <person name="Hayashi K."/>
            <person name="Sato H."/>
            <person name="Nagai K."/>
            <person name="Kimura K."/>
            <person name="Makita H."/>
            <person name="Sekine M."/>
            <person name="Obayashi M."/>
            <person name="Nishi T."/>
            <person name="Shibahara T."/>
            <person name="Tanaka T."/>
            <person name="Ishii S."/>
            <person name="Yamamoto J."/>
            <person name="Saito K."/>
            <person name="Kawai Y."/>
            <person name="Isono Y."/>
            <person name="Nakamura Y."/>
            <person name="Nagahari K."/>
            <person name="Murakami K."/>
            <person name="Yasuda T."/>
            <person name="Iwayanagi T."/>
            <person name="Wagatsuma M."/>
            <person name="Shiratori A."/>
            <person name="Sudo H."/>
            <person name="Hosoiri T."/>
            <person name="Kaku Y."/>
            <person name="Kodaira H."/>
            <person name="Kondo H."/>
            <person name="Sugawara M."/>
            <person name="Takahashi M."/>
            <person name="Kanda K."/>
            <person name="Yokoi T."/>
            <person name="Furuya T."/>
            <person name="Kikkawa E."/>
            <person name="Omura Y."/>
            <person name="Abe K."/>
            <person name="Kamihara K."/>
            <person name="Katsuta N."/>
            <person name="Sato K."/>
            <person name="Tanikawa M."/>
            <person name="Yamazaki M."/>
            <person name="Ninomiya K."/>
            <person name="Ishibashi T."/>
            <person name="Yamashita H."/>
            <person name="Murakawa K."/>
            <person name="Fujimori K."/>
            <person name="Tanai H."/>
            <person name="Kimata M."/>
            <person name="Watanabe M."/>
            <person name="Hiraoka S."/>
            <person name="Chiba Y."/>
            <person name="Ishida S."/>
            <person name="Ono Y."/>
            <person name="Takiguchi S."/>
            <person name="Watanabe S."/>
            <person name="Yosida M."/>
            <person name="Hotuta T."/>
            <person name="Kusano J."/>
            <person name="Kanehori K."/>
            <person name="Takahashi-Fujii A."/>
            <person name="Hara H."/>
            <person name="Tanase T.-O."/>
            <person name="Nomura Y."/>
            <person name="Togiya S."/>
            <person name="Komai F."/>
            <person name="Hara R."/>
            <person name="Takeuchi K."/>
            <person name="Arita M."/>
            <person name="Imose N."/>
            <person name="Musashino K."/>
            <person name="Yuuki H."/>
            <person name="Oshima A."/>
            <person name="Sasaki N."/>
            <person name="Aotsuka S."/>
            <person name="Yoshikawa Y."/>
            <person name="Matsunawa H."/>
            <person name="Ichihara T."/>
            <person name="Shiohata N."/>
            <person name="Sano S."/>
            <person name="Moriya S."/>
            <person name="Momiyama H."/>
            <person name="Satoh N."/>
            <person name="Takami S."/>
            <person name="Terashima Y."/>
            <person name="Suzuki O."/>
            <person name="Nakagawa S."/>
            <person name="Senoh A."/>
            <person name="Mizoguchi H."/>
            <person name="Goto Y."/>
            <person name="Shimizu F."/>
            <person name="Wakebe H."/>
            <person name="Hishigaki H."/>
            <person name="Watanabe T."/>
            <person name="Sugiyama A."/>
            <person name="Takemoto M."/>
            <person name="Kawakami B."/>
            <person name="Yamazaki M."/>
            <person name="Watanabe K."/>
            <person name="Kumagai A."/>
            <person name="Itakura S."/>
            <person name="Fukuzumi Y."/>
            <person name="Fujimori Y."/>
            <person name="Komiyama M."/>
            <person name="Tashiro H."/>
            <person name="Tanigami A."/>
            <person name="Fujiwara T."/>
            <person name="Ono T."/>
            <person name="Yamada K."/>
            <person name="Fujii Y."/>
            <person name="Ozaki K."/>
            <person name="Hirao M."/>
            <person name="Ohmori Y."/>
            <person name="Kawabata A."/>
            <person name="Hikiji T."/>
            <person name="Kobatake N."/>
            <person name="Inagaki H."/>
            <person name="Ikema Y."/>
            <person name="Okamoto S."/>
            <person name="Okitani R."/>
            <person name="Kawakami T."/>
            <person name="Noguchi S."/>
            <person name="Itoh T."/>
            <person name="Shigeta K."/>
            <person name="Senba T."/>
            <person name="Matsumura K."/>
            <person name="Nakajima Y."/>
            <person name="Mizuno T."/>
            <person name="Morinaga M."/>
            <person name="Sasaki M."/>
            <person name="Togashi T."/>
            <person name="Oyama M."/>
            <person name="Hata H."/>
            <person name="Watanabe M."/>
            <person name="Komatsu T."/>
            <person name="Mizushima-Sugano J."/>
            <person name="Satoh T."/>
            <person name="Shirai Y."/>
            <person name="Takahashi Y."/>
            <person name="Nakagawa K."/>
            <person name="Okumura K."/>
            <person name="Nagase T."/>
            <person name="Nomura N."/>
            <person name="Kikuchi H."/>
            <person name="Masuho Y."/>
            <person name="Yamashita R."/>
            <person name="Nakai K."/>
            <person name="Yada T."/>
            <person name="Nakamura Y."/>
            <person name="Ohara O."/>
            <person name="Isogai T."/>
            <person name="Sugano S."/>
        </authorList>
    </citation>
    <scope>NUCLEOTIDE SEQUENCE [LARGE SCALE MRNA] OF 1-654 AND 906-1422 (ISOFORM 1)</scope>
    <source>
        <tissue>Small intestine</tissue>
        <tissue>Testis</tissue>
    </source>
</reference>
<reference key="5">
    <citation type="journal article" date="2000" name="DNA Res.">
        <title>Prediction of the coding sequences of unidentified human genes. XIX. The complete sequences of 100 new cDNA clones from brain which code for large proteins in vitro.</title>
        <authorList>
            <person name="Nagase T."/>
            <person name="Kikuno R."/>
            <person name="Hattori A."/>
            <person name="Kondo Y."/>
            <person name="Okumura K."/>
            <person name="Ohara O."/>
        </authorList>
    </citation>
    <scope>NUCLEOTIDE SEQUENCE [LARGE SCALE MRNA] OF 203-1422 (ISOFORM 2)</scope>
    <source>
        <tissue>Brain</tissue>
    </source>
</reference>
<reference key="6">
    <citation type="journal article" date="2004" name="Genome Res.">
        <title>The status, quality, and expansion of the NIH full-length cDNA project: the Mammalian Gene Collection (MGC).</title>
        <authorList>
            <consortium name="The MGC Project Team"/>
        </authorList>
    </citation>
    <scope>NUCLEOTIDE SEQUENCE [LARGE SCALE MRNA] OF 895-1422</scope>
    <source>
        <tissue>Brain</tissue>
        <tissue>PNS</tissue>
    </source>
</reference>
<reference key="7">
    <citation type="journal article" date="2007" name="BMC Genomics">
        <title>The full-ORF clone resource of the German cDNA consortium.</title>
        <authorList>
            <person name="Bechtel S."/>
            <person name="Rosenfelder H."/>
            <person name="Duda A."/>
            <person name="Schmidt C.P."/>
            <person name="Ernst U."/>
            <person name="Wellenreuther R."/>
            <person name="Mehrle A."/>
            <person name="Schuster C."/>
            <person name="Bahr A."/>
            <person name="Bloecker H."/>
            <person name="Heubner D."/>
            <person name="Hoerlein A."/>
            <person name="Michel G."/>
            <person name="Wedler H."/>
            <person name="Koehrer K."/>
            <person name="Ottenwaelder B."/>
            <person name="Poustka A."/>
            <person name="Wiemann S."/>
            <person name="Schupp I."/>
        </authorList>
    </citation>
    <scope>NUCLEOTIDE SEQUENCE [LARGE SCALE MRNA] OF 1009-1422</scope>
    <source>
        <tissue>Melanoma</tissue>
    </source>
</reference>
<reference key="8">
    <citation type="journal article" date="2009" name="Anal. Chem.">
        <title>Lys-N and trypsin cover complementary parts of the phosphoproteome in a refined SCX-based approach.</title>
        <authorList>
            <person name="Gauci S."/>
            <person name="Helbig A.O."/>
            <person name="Slijper M."/>
            <person name="Krijgsveld J."/>
            <person name="Heck A.J."/>
            <person name="Mohammed S."/>
        </authorList>
    </citation>
    <scope>IDENTIFICATION BY MASS SPECTROMETRY [LARGE SCALE ANALYSIS]</scope>
</reference>
<reference key="9">
    <citation type="journal article" date="2018" name="J. Am. Coll. Cardiol.">
        <title>Formin homology 2 domain containing 3 (FHOD3) is a genetic basis for hypertrophic cardiomyopathy.</title>
        <authorList>
            <person name="Ochoa J.P."/>
            <person name="Sabater-Molina M."/>
            <person name="Garcia-Pinilla J.M."/>
            <person name="Mogensen J."/>
            <person name="Restrepo-Cordoba A."/>
            <person name="Palomino-Doza J."/>
            <person name="Villacorta E."/>
            <person name="Martinez-Moreno M."/>
            <person name="Ramos-Maqueda J."/>
            <person name="Zorio E."/>
            <person name="Pena-Pena M.L."/>
            <person name="Garcia-Granja P.E."/>
            <person name="Rodriguez-Palomares J.F."/>
            <person name="Cardenas-Reyes I.J."/>
            <person name="de la Torre-Carpente M.M."/>
            <person name="Bautista-Paves A."/>
            <person name="Akhtar M.M."/>
            <person name="Cicerchia M.N."/>
            <person name="Bilbao-Quesada R."/>
            <person name="Mogollon-Jimenez M.V."/>
            <person name="Salazar-Mendiguchia J."/>
            <person name="Mesa Latorre J.M."/>
            <person name="Arnaez B."/>
            <person name="Olavarri-Miguel I."/>
            <person name="Fuentes-Canamero M.E."/>
            <person name="Lamounier A. Jr."/>
            <person name="Perez Ruiz J.M."/>
            <person name="Climent-Paya V."/>
            <person name="Perez-Sanchez I."/>
            <person name="Trujillo-Quintero J.P."/>
            <person name="Lopes L.R."/>
            <person name="Reparaz-Andrade A."/>
            <person name="Marin-Iglesias R."/>
            <person name="Rodriguez-Vilela A."/>
            <person name="Sandin-Fuentes M."/>
            <person name="Garrote J.A."/>
            <person name="Cortel-Fuster A."/>
            <person name="Lopez-Garrido M."/>
            <person name="Fontalba-Romero A."/>
            <person name="Ripoll-Vera T."/>
            <person name="Llano-Rivas I."/>
            <person name="Fernandez-Fernandez X."/>
            <person name="Isidoro-Garcia M."/>
            <person name="Garcia-Giustiniani D."/>
            <person name="Barriales-Villa R."/>
            <person name="Ortiz-Genga M."/>
            <person name="Garcia-Pavia P."/>
            <person name="Elliott P.M."/>
            <person name="Gimeno J.R."/>
            <person name="Monserrat L."/>
        </authorList>
    </citation>
    <scope>VARIANTS CMH28 VAL-321; ARG-351; CYS-363; ARG-371; HIS-383; GLU-419; LEU-440; GLY-459; GLY-462; PRO-462; TRP-462; SER-466; SER-469; LYS-479; LYS-640; CYS-653; THR-657; ASN-770; LEU-865; THR-871; GLN-1194; HIS-1356; GLY-1376 AND 1397-ARG--LEU-1422 DEL (ISOFORM 1)</scope>
    <scope>VARIANTS CMH28 SER-527 DEL; CYS-528 AND GLU-542 (ISOFORM 4)</scope>
    <scope>INVOLVEMENT IN CMH28</scope>
</reference>
<reference key="10">
    <citation type="journal article" date="2020" name="J. Gene Med.">
        <title>Exome sequencing identifies a FHOD3 p.S527del mutation in a Chinese family with hypertrophic cardiomyopathy.</title>
        <authorList>
            <person name="Huang S."/>
            <person name="Pu T."/>
            <person name="Wei W."/>
            <person name="Xu R."/>
            <person name="Wu Y."/>
        </authorList>
    </citation>
    <scope>VARIANT CMH28 SER-527 DEL (ISOFORM 4)</scope>
    <scope>INVOLVEMENT IN CMH28</scope>
</reference>
<organism>
    <name type="scientific">Homo sapiens</name>
    <name type="common">Human</name>
    <dbReference type="NCBI Taxonomy" id="9606"/>
    <lineage>
        <taxon>Eukaryota</taxon>
        <taxon>Metazoa</taxon>
        <taxon>Chordata</taxon>
        <taxon>Craniata</taxon>
        <taxon>Vertebrata</taxon>
        <taxon>Euteleostomi</taxon>
        <taxon>Mammalia</taxon>
        <taxon>Eutheria</taxon>
        <taxon>Euarchontoglires</taxon>
        <taxon>Primates</taxon>
        <taxon>Haplorrhini</taxon>
        <taxon>Catarrhini</taxon>
        <taxon>Hominidae</taxon>
        <taxon>Homo</taxon>
    </lineage>
</organism>
<dbReference type="EMBL" id="AB084087">
    <property type="protein sequence ID" value="BAC67014.1"/>
    <property type="molecule type" value="mRNA"/>
</dbReference>
<dbReference type="EMBL" id="HM191478">
    <property type="protein sequence ID" value="ADL62709.1"/>
    <property type="molecule type" value="mRNA"/>
</dbReference>
<dbReference type="EMBL" id="AC023043">
    <property type="status" value="NOT_ANNOTATED_CDS"/>
    <property type="molecule type" value="Genomic_DNA"/>
</dbReference>
<dbReference type="EMBL" id="AC055840">
    <property type="status" value="NOT_ANNOTATED_CDS"/>
    <property type="molecule type" value="Genomic_DNA"/>
</dbReference>
<dbReference type="EMBL" id="AC090333">
    <property type="status" value="NOT_ANNOTATED_CDS"/>
    <property type="molecule type" value="Genomic_DNA"/>
</dbReference>
<dbReference type="EMBL" id="AC131053">
    <property type="status" value="NOT_ANNOTATED_CDS"/>
    <property type="molecule type" value="Genomic_DNA"/>
</dbReference>
<dbReference type="EMBL" id="AK025950">
    <property type="protein sequence ID" value="BAB15292.1"/>
    <property type="status" value="ALT_INIT"/>
    <property type="molecule type" value="mRNA"/>
</dbReference>
<dbReference type="EMBL" id="AK026370">
    <property type="protein sequence ID" value="BAB15463.1"/>
    <property type="status" value="ALT_INIT"/>
    <property type="molecule type" value="mRNA"/>
</dbReference>
<dbReference type="EMBL" id="AK128053">
    <property type="protein sequence ID" value="BAC87252.1"/>
    <property type="molecule type" value="mRNA"/>
</dbReference>
<dbReference type="EMBL" id="AB051482">
    <property type="protein sequence ID" value="BAB21786.1"/>
    <property type="molecule type" value="mRNA"/>
</dbReference>
<dbReference type="EMBL" id="BC050670">
    <property type="protein sequence ID" value="AAH50670.1"/>
    <property type="molecule type" value="mRNA"/>
</dbReference>
<dbReference type="EMBL" id="BC081563">
    <property type="protein sequence ID" value="AAH81563.1"/>
    <property type="molecule type" value="mRNA"/>
</dbReference>
<dbReference type="EMBL" id="AL834480">
    <property type="protein sequence ID" value="CAD39139.1"/>
    <property type="molecule type" value="mRNA"/>
</dbReference>
<dbReference type="CCDS" id="CCDS32816.1">
    <molecule id="Q2V2M9-3"/>
</dbReference>
<dbReference type="CCDS" id="CCDS62418.1">
    <molecule id="Q2V2M9-4"/>
</dbReference>
<dbReference type="CCDS" id="CCDS62419.1">
    <molecule id="Q2V2M9-1"/>
</dbReference>
<dbReference type="RefSeq" id="NP_001268668.1">
    <molecule id="Q2V2M9-1"/>
    <property type="nucleotide sequence ID" value="NM_001281739.3"/>
</dbReference>
<dbReference type="RefSeq" id="NP_001268669.1">
    <molecule id="Q2V2M9-4"/>
    <property type="nucleotide sequence ID" value="NM_001281740.3"/>
</dbReference>
<dbReference type="RefSeq" id="NP_079411.2">
    <molecule id="Q2V2M9-3"/>
    <property type="nucleotide sequence ID" value="NM_025135.4"/>
</dbReference>
<dbReference type="RefSeq" id="XP_005258412.1">
    <molecule id="Q2V2M9-2"/>
    <property type="nucleotide sequence ID" value="XM_005258355.3"/>
</dbReference>
<dbReference type="SMR" id="Q2V2M9"/>
<dbReference type="BioGRID" id="123175">
    <property type="interactions" value="10"/>
</dbReference>
<dbReference type="ELM" id="Q2V2M9"/>
<dbReference type="FunCoup" id="Q2V2M9">
    <property type="interactions" value="666"/>
</dbReference>
<dbReference type="IntAct" id="Q2V2M9">
    <property type="interactions" value="7"/>
</dbReference>
<dbReference type="STRING" id="9606.ENSP00000466937"/>
<dbReference type="GlyGen" id="Q2V2M9">
    <property type="glycosylation" value="2 sites, 1 O-linked glycan (1 site)"/>
</dbReference>
<dbReference type="iPTMnet" id="Q2V2M9"/>
<dbReference type="PhosphoSitePlus" id="Q2V2M9"/>
<dbReference type="BioMuta" id="FHOD3"/>
<dbReference type="DMDM" id="300669639"/>
<dbReference type="jPOST" id="Q2V2M9"/>
<dbReference type="MassIVE" id="Q2V2M9"/>
<dbReference type="PeptideAtlas" id="Q2V2M9"/>
<dbReference type="ProteomicsDB" id="61508">
    <molecule id="Q2V2M9-1"/>
</dbReference>
<dbReference type="ProteomicsDB" id="61509">
    <molecule id="Q2V2M9-2"/>
</dbReference>
<dbReference type="ProteomicsDB" id="61510">
    <molecule id="Q2V2M9-3"/>
</dbReference>
<dbReference type="Antibodypedia" id="8734">
    <property type="antibodies" value="51 antibodies from 12 providers"/>
</dbReference>
<dbReference type="DNASU" id="80206"/>
<dbReference type="Ensembl" id="ENST00000257209.8">
    <molecule id="Q2V2M9-3"/>
    <property type="protein sequence ID" value="ENSP00000257209.3"/>
    <property type="gene ID" value="ENSG00000134775.16"/>
</dbReference>
<dbReference type="Ensembl" id="ENST00000359247.8">
    <molecule id="Q2V2M9-1"/>
    <property type="protein sequence ID" value="ENSP00000352186.3"/>
    <property type="gene ID" value="ENSG00000134775.16"/>
</dbReference>
<dbReference type="Ensembl" id="ENST00000590592.6">
    <molecule id="Q2V2M9-4"/>
    <property type="protein sequence ID" value="ENSP00000466937.1"/>
    <property type="gene ID" value="ENSG00000134775.16"/>
</dbReference>
<dbReference type="GeneID" id="80206"/>
<dbReference type="KEGG" id="hsa:80206"/>
<dbReference type="MANE-Select" id="ENST00000590592.6">
    <molecule id="Q2V2M9-4"/>
    <property type="protein sequence ID" value="ENSP00000466937.1"/>
    <property type="RefSeq nucleotide sequence ID" value="NM_001281740.3"/>
    <property type="RefSeq protein sequence ID" value="NP_001268669.1"/>
</dbReference>
<dbReference type="UCSC" id="uc002kzs.3">
    <molecule id="Q2V2M9-1"/>
    <property type="organism name" value="human"/>
</dbReference>
<dbReference type="AGR" id="HGNC:26178"/>
<dbReference type="CTD" id="80206"/>
<dbReference type="DisGeNET" id="80206"/>
<dbReference type="GeneCards" id="FHOD3"/>
<dbReference type="HGNC" id="HGNC:26178">
    <property type="gene designation" value="FHOD3"/>
</dbReference>
<dbReference type="HPA" id="ENSG00000134775">
    <property type="expression patterns" value="Tissue enhanced (heart)"/>
</dbReference>
<dbReference type="MalaCards" id="FHOD3"/>
<dbReference type="MIM" id="609691">
    <property type="type" value="gene"/>
</dbReference>
<dbReference type="MIM" id="619402">
    <property type="type" value="phenotype"/>
</dbReference>
<dbReference type="neXtProt" id="NX_Q2V2M9"/>
<dbReference type="OpenTargets" id="ENSG00000134775"/>
<dbReference type="PharmGKB" id="PA134929910"/>
<dbReference type="VEuPathDB" id="HostDB:ENSG00000134775"/>
<dbReference type="eggNOG" id="KOG1925">
    <property type="taxonomic scope" value="Eukaryota"/>
</dbReference>
<dbReference type="GeneTree" id="ENSGT00940000154807"/>
<dbReference type="HOGENOM" id="CLU_000814_0_1_1"/>
<dbReference type="InParanoid" id="Q2V2M9"/>
<dbReference type="OMA" id="GHYSDGH"/>
<dbReference type="OrthoDB" id="9806920at2759"/>
<dbReference type="PAN-GO" id="Q2V2M9">
    <property type="GO annotations" value="7 GO annotations based on evolutionary models"/>
</dbReference>
<dbReference type="PhylomeDB" id="Q2V2M9"/>
<dbReference type="TreeFam" id="TF316268"/>
<dbReference type="PathwayCommons" id="Q2V2M9"/>
<dbReference type="SignaLink" id="Q2V2M9"/>
<dbReference type="SIGNOR" id="Q2V2M9"/>
<dbReference type="BioGRID-ORCS" id="80206">
    <property type="hits" value="14 hits in 1153 CRISPR screens"/>
</dbReference>
<dbReference type="ChiTaRS" id="FHOD3">
    <property type="organism name" value="human"/>
</dbReference>
<dbReference type="GenomeRNAi" id="80206"/>
<dbReference type="Pharos" id="Q2V2M9">
    <property type="development level" value="Tbio"/>
</dbReference>
<dbReference type="PRO" id="PR:Q2V2M9"/>
<dbReference type="Proteomes" id="UP000005640">
    <property type="component" value="Chromosome 18"/>
</dbReference>
<dbReference type="RNAct" id="Q2V2M9">
    <property type="molecule type" value="protein"/>
</dbReference>
<dbReference type="Bgee" id="ENSG00000134775">
    <property type="expression patterns" value="Expressed in apex of heart and 160 other cell types or tissues"/>
</dbReference>
<dbReference type="ExpressionAtlas" id="Q2V2M9">
    <property type="expression patterns" value="baseline and differential"/>
</dbReference>
<dbReference type="GO" id="GO:0005737">
    <property type="term" value="C:cytoplasm"/>
    <property type="evidence" value="ECO:0000318"/>
    <property type="project" value="GO_Central"/>
</dbReference>
<dbReference type="GO" id="GO:0005856">
    <property type="term" value="C:cytoskeleton"/>
    <property type="evidence" value="ECO:0000318"/>
    <property type="project" value="GO_Central"/>
</dbReference>
<dbReference type="GO" id="GO:0030018">
    <property type="term" value="C:Z disc"/>
    <property type="evidence" value="ECO:0007669"/>
    <property type="project" value="UniProtKB-SubCell"/>
</dbReference>
<dbReference type="GO" id="GO:0051015">
    <property type="term" value="F:actin filament binding"/>
    <property type="evidence" value="ECO:0000318"/>
    <property type="project" value="GO_Central"/>
</dbReference>
<dbReference type="GO" id="GO:0055003">
    <property type="term" value="P:cardiac myofibril assembly"/>
    <property type="evidence" value="ECO:0000318"/>
    <property type="project" value="GO_Central"/>
</dbReference>
<dbReference type="GO" id="GO:0030866">
    <property type="term" value="P:cortical actin cytoskeleton organization"/>
    <property type="evidence" value="ECO:0000318"/>
    <property type="project" value="GO_Central"/>
</dbReference>
<dbReference type="GO" id="GO:0045214">
    <property type="term" value="P:sarcomere organization"/>
    <property type="evidence" value="ECO:0000318"/>
    <property type="project" value="GO_Central"/>
</dbReference>
<dbReference type="FunFam" id="1.25.10.10:FF:000056">
    <property type="entry name" value="FH1/FH2 domain-containing protein 3 isoform X1"/>
    <property type="match status" value="1"/>
</dbReference>
<dbReference type="FunFam" id="1.20.58.2220:FF:000004">
    <property type="entry name" value="Formin homology 2 domain-containing 3"/>
    <property type="match status" value="1"/>
</dbReference>
<dbReference type="Gene3D" id="1.20.58.2220">
    <property type="entry name" value="Formin, FH2 domain"/>
    <property type="match status" value="1"/>
</dbReference>
<dbReference type="Gene3D" id="1.25.10.10">
    <property type="entry name" value="Leucine-rich Repeat Variant"/>
    <property type="match status" value="1"/>
</dbReference>
<dbReference type="InterPro" id="IPR011989">
    <property type="entry name" value="ARM-like"/>
</dbReference>
<dbReference type="InterPro" id="IPR016024">
    <property type="entry name" value="ARM-type_fold"/>
</dbReference>
<dbReference type="InterPro" id="IPR014767">
    <property type="entry name" value="DAD_dom"/>
</dbReference>
<dbReference type="InterPro" id="IPR015425">
    <property type="entry name" value="FH2_Formin"/>
</dbReference>
<dbReference type="InterPro" id="IPR042201">
    <property type="entry name" value="FH2_Formin_sf"/>
</dbReference>
<dbReference type="InterPro" id="IPR056771">
    <property type="entry name" value="FH3_FHOD1-3-like"/>
</dbReference>
<dbReference type="InterPro" id="IPR041387">
    <property type="entry name" value="FHOD1_GBD_N"/>
</dbReference>
<dbReference type="InterPro" id="IPR014768">
    <property type="entry name" value="GBD/FH3_dom"/>
</dbReference>
<dbReference type="PANTHER" id="PTHR45920:SF3">
    <property type="entry name" value="FH1_FH2 DOMAIN-CONTAINING PROTEIN 3"/>
    <property type="match status" value="1"/>
</dbReference>
<dbReference type="PANTHER" id="PTHR45920">
    <property type="entry name" value="FORMIN HOMOLOGY 2 DOMAIN CONTAINING, ISOFORM I"/>
    <property type="match status" value="1"/>
</dbReference>
<dbReference type="Pfam" id="PF02181">
    <property type="entry name" value="FH2"/>
    <property type="match status" value="1"/>
</dbReference>
<dbReference type="Pfam" id="PF24959">
    <property type="entry name" value="FH3_FHOD1-3"/>
    <property type="match status" value="1"/>
</dbReference>
<dbReference type="Pfam" id="PF18382">
    <property type="entry name" value="Formin_GBD_N"/>
    <property type="match status" value="1"/>
</dbReference>
<dbReference type="SMART" id="SM00498">
    <property type="entry name" value="FH2"/>
    <property type="match status" value="1"/>
</dbReference>
<dbReference type="SUPFAM" id="SSF48371">
    <property type="entry name" value="ARM repeat"/>
    <property type="match status" value="1"/>
</dbReference>
<dbReference type="SUPFAM" id="SSF101447">
    <property type="entry name" value="Formin homology 2 domain (FH2 domain)"/>
    <property type="match status" value="1"/>
</dbReference>
<dbReference type="PROSITE" id="PS51231">
    <property type="entry name" value="DAD"/>
    <property type="match status" value="1"/>
</dbReference>
<dbReference type="PROSITE" id="PS51444">
    <property type="entry name" value="FH2"/>
    <property type="match status" value="1"/>
</dbReference>
<dbReference type="PROSITE" id="PS51232">
    <property type="entry name" value="GBD_FH3"/>
    <property type="match status" value="1"/>
</dbReference>
<keyword id="KW-0009">Actin-binding</keyword>
<keyword id="KW-0025">Alternative splicing</keyword>
<keyword id="KW-0122">Cardiomyopathy</keyword>
<keyword id="KW-0175">Coiled coil</keyword>
<keyword id="KW-0963">Cytoplasm</keyword>
<keyword id="KW-0206">Cytoskeleton</keyword>
<keyword id="KW-0225">Disease variant</keyword>
<keyword id="KW-0597">Phosphoprotein</keyword>
<keyword id="KW-1267">Proteomics identification</keyword>
<keyword id="KW-1185">Reference proteome</keyword>
<evidence type="ECO:0000250" key="1"/>
<evidence type="ECO:0000250" key="2">
    <source>
        <dbReference type="UniProtKB" id="Q76LL6"/>
    </source>
</evidence>
<evidence type="ECO:0000255" key="3"/>
<evidence type="ECO:0000255" key="4">
    <source>
        <dbReference type="PROSITE-ProRule" id="PRU00577"/>
    </source>
</evidence>
<evidence type="ECO:0000255" key="5">
    <source>
        <dbReference type="PROSITE-ProRule" id="PRU00579"/>
    </source>
</evidence>
<evidence type="ECO:0000255" key="6">
    <source>
        <dbReference type="PROSITE-ProRule" id="PRU00774"/>
    </source>
</evidence>
<evidence type="ECO:0000256" key="7">
    <source>
        <dbReference type="SAM" id="MobiDB-lite"/>
    </source>
</evidence>
<evidence type="ECO:0000269" key="8">
    <source>
    </source>
</evidence>
<evidence type="ECO:0000269" key="9">
    <source>
    </source>
</evidence>
<evidence type="ECO:0000269" key="10">
    <source>
    </source>
</evidence>
<evidence type="ECO:0000269" key="11">
    <source>
    </source>
</evidence>
<evidence type="ECO:0000303" key="12">
    <source>
    </source>
</evidence>
<evidence type="ECO:0000303" key="13">
    <source>
    </source>
</evidence>
<evidence type="ECO:0000305" key="14"/>
<protein>
    <recommendedName>
        <fullName>FH1/FH2 domain-containing protein 3</fullName>
    </recommendedName>
    <alternativeName>
        <fullName>Formactin-2</fullName>
    </alternativeName>
    <alternativeName>
        <fullName>Formin homolog overexpressed in spleen 2</fullName>
        <shortName>hFHOS2</shortName>
    </alternativeName>
</protein>
<name>FHOD3_HUMAN</name>
<gene>
    <name type="primary">FHOD3</name>
    <name type="synonym">FHOS2</name>
    <name type="synonym">KIAA1695</name>
</gene>
<proteinExistence type="evidence at protein level"/>
<comment type="function">
    <text evidence="1 9">Actin-organizing protein that may cause stress fiber formation together with cell elongation (By similarity). Isoform 4 may play a role in actin filament polymerization in cardiomyocytes.</text>
</comment>
<comment type="subunit">
    <text evidence="1 9">Interacts with nestin/NES-based interfilament (IF) (By similarity). Interacts with SQSTM1; isoform 4 threonine phosphorylation disrupts SQSTM1-binding.</text>
</comment>
<comment type="interaction">
    <interactant intactId="EBI-6395541">
        <id>Q2V2M9</id>
    </interactant>
    <interactant intactId="EBI-307104">
        <id>Q13501</id>
        <label>SQSTM1</label>
    </interactant>
    <organismsDiffer>false</organismsDiffer>
    <experiments>6</experiments>
</comment>
<comment type="interaction">
    <interactant intactId="EBI-6395505">
        <id>Q2V2M9-4</id>
    </interactant>
    <interactant intactId="EBI-307104">
        <id>Q13501</id>
        <label>SQSTM1</label>
    </interactant>
    <organismsDiffer>false</organismsDiffer>
    <experiments>4</experiments>
</comment>
<comment type="subcellular location">
    <subcellularLocation>
        <location evidence="9">Cytoplasm</location>
        <location evidence="9">Cytoskeleton</location>
    </subcellularLocation>
    <text evidence="1">Main part of the protein localizes to actin fibers and the remaining part displays filamentous staining.</text>
</comment>
<comment type="subcellular location">
    <molecule>Isoform 4</molecule>
    <subcellularLocation>
        <location>Cytoplasm</location>
        <location>Myofibril</location>
        <location>Sarcomere</location>
        <location>Z line</location>
    </subcellularLocation>
    <text>Threonine phosphorylation in isoform 4-specific sequence TDTDEEEEVE is required for targeting to myofibrils in cardiomyocytes.</text>
</comment>
<comment type="alternative products">
    <event type="alternative splicing"/>
    <isoform>
        <id>Q2V2M9-1</id>
        <name>1</name>
        <sequence type="displayed"/>
    </isoform>
    <isoform>
        <id>Q2V2M9-2</id>
        <name>2</name>
        <sequence type="described" ref="VSP_024397 VSP_024398"/>
    </isoform>
    <isoform>
        <id>Q2V2M9-3</id>
        <name>3</name>
        <sequence type="described" ref="VSP_024398"/>
    </isoform>
    <isoform>
        <id>Q2V2M9-4</id>
        <name>4</name>
        <sequence type="described" ref="VSP_044682 VSP_024398 VSP_044683"/>
    </isoform>
</comment>
<comment type="tissue specificity">
    <text evidence="8 9">Expressed in the heart, kidney and brain. May be down-regulated in various types of heart diseases, including idiopathic dilated, ventricular dilated, familial dilated and perinatal dilated cardiomyopathies, as well as ischemic heart disease (at protein level).</text>
</comment>
<comment type="domain">
    <text evidence="1">The DAD domain regulates activation via by an autoinhibitory interaction with the GBD/FH3 domain. This autoinhibition is released upon competitive binding of an activated GTPase. The release of DAD allows the FH2 domain to then nucleate and elongate nonbranched actin filaments (By similarity).</text>
</comment>
<comment type="PTM">
    <molecule>Isoform 4</molecule>
    <text evidence="9">Phosphorylated on Thr-1474 and Thr-1476 by CK2.</text>
</comment>
<comment type="disease" evidence="10 11">
    <disease id="DI-06150">
        <name>Cardiomyopathy, familial hypertrophic, 28</name>
        <acronym>CMH28</acronym>
        <description>A form of hypertrophic cardiomyopathy, a heart disorder characterized by ventricular hypertrophy, which is usually asymmetric and often involves the interventricular septum. The symptoms include dyspnea, syncope, collapse, palpitations, and chest pain. They can be readily provoked by exercise. The disorder has inter- and intrafamilial variability ranging from benign to malignant forms with high risk of cardiac failure and sudden cardiac death. CMH28 is an autosomal dominant form with incomplete penetrance.</description>
        <dbReference type="MIM" id="619402"/>
    </disease>
    <text>The disease is caused by variants affecting the gene represented in this entry.</text>
</comment>
<comment type="similarity">
    <text evidence="14">Belongs to the formin homology family.</text>
</comment>
<comment type="sequence caution" evidence="14">
    <conflict type="erroneous initiation">
        <sequence resource="EMBL-CDS" id="BAB15292"/>
    </conflict>
    <text>Truncated N-terminus.</text>
</comment>
<comment type="sequence caution" evidence="14">
    <conflict type="erroneous initiation">
        <sequence resource="EMBL-CDS" id="BAB15463"/>
    </conflict>
    <text>Truncated N-terminus.</text>
</comment>
<accession>Q2V2M9</accession>
<accession>A8MQT4</accession>
<accession>E5F5Q0</accession>
<accession>Q642I2</accession>
<accession>Q6ZRQ7</accession>
<accession>Q86TF9</accession>
<accession>Q8N3A5</accession>
<accession>Q9C0G8</accession>
<accession>Q9H604</accession>
<accession>Q9H6G7</accession>
<sequence>MATLACRVQFLDDTDPFNSTNFPEPSRPPLFTFREDLALGTQLAGVHRLLQAPHKLDDCTLQLSHNGAYLDLEATLAEQRDELEGFQDDAGRGKKHSIILRTQLSVRVHACIEKLYNSSGRDLRRALFSLKQIFQDDKDLVHEFVVAEGLTCLIKVGAEADQNYQNYILRALGQIMLYVDGMNGVINRNETIQWLYTLIGSKFRLVVKTALKLLLVFVEYSESNAPLLIQAVTAVDTKRGVKPWSNIMEILEEKDGVDTELLVYAMTLVNKTLSGLPDQDTFYDVVDCLEELGIAAVSQRHLNKKGTDLDLVEQLNIYEVALRHEDGDETTEPPPSGCRDRRRASVCSSGGGEHRGLDRRRSRRHSVQSIKSTLSAPTSPCSQSAPSFKPNQVRDLREKYSNFGNNSYHSSRPSSGSSVPTTPTSSVSPPQEARLERSSPSGLLTSSFRQHQESLAAERERRRQEREERLQRIEREERNKFRYKYLEQLAAEEHEKELRSRSVSRGRADLSLDLTSPAAPACLAPLSHSPSSSDSQEALTVSASSPGTPHHPQASAGDPEPESEAEPEAEAGAGQVADEAGQDIASAHEGAETEVEQALEQEPEERASLSEKERQNEGVNERDNCSASSVSSSSSTLEREEKEDKLSRDRTTGLWPAGVQDAGVNGQCGDILTNKRFMLDMLYAHNRKSPDDEEKGDGEAGRTQQEAEAVASLATRISTLQANSQTQDESVRRVDVGCLDNRGSVKAFAEKFNSGDLGRGSISPDAEPNDKVPETAPVQPKTESDYIWDQLMANPRELRIQDMDFTDLGEEDDIDVLDVDLGHREAPGPPPPPPPTFLGLPPPPPPPLLDSIPPPPVPGNLLVPPPPVFNAPQGLGWSQVPRGQPTFTKKKKTIRLFWNEVRPFDWPCKNNRRCREFLWSKLEPIKVDTSRLEHLFESKSKELSVSKKTAADGKRQEIIVLDSKRSNAINIGLTVLPPPRTIKIAILNFDEYALNKEGIEKILTMIPTDEEKQKIQEAQLANPEIPLGSAEQFLLTLSSISELSARLHLWAFKMDYETTEKEVAEPLLDLKEGIDQLENNKTLGFILSTLLAIGNFLNGTNAKAFELSYLEKVPEVKDTVHKQSLLHHVCTMVVENFPDSSDLYSEIGAITRSAKVDFDQLQDNLCQMERRCKASWDHLKAIAKHEMKPVLKQRMSEFLKDCAERIIILKIVHRRIINRFHSFLLFMGHPPYAIREVNINKFCRIISEFALEYRTTRERVLQQKQKRANHRERNKTRGKMITDSGKFSGSSPAPPSQPQGLSYAEDAAEHENMKAVLKTSSPSVEDATPALGVRTRSRASRGSTSSWTMGTDDSPNVTDDAADEIMDRIVKSATQVPSQRVVPRERKRSRANRKSLRRTLKSGLTPEEARALGLVGTSELQL</sequence>